<organism>
    <name type="scientific">Methanosarcina mazei (strain ATCC BAA-159 / DSM 3647 / Goe1 / Go1 / JCM 11833 / OCM 88)</name>
    <name type="common">Methanosarcina frisia</name>
    <dbReference type="NCBI Taxonomy" id="192952"/>
    <lineage>
        <taxon>Archaea</taxon>
        <taxon>Methanobacteriati</taxon>
        <taxon>Methanobacteriota</taxon>
        <taxon>Stenosarchaea group</taxon>
        <taxon>Methanomicrobia</taxon>
        <taxon>Methanosarcinales</taxon>
        <taxon>Methanosarcinaceae</taxon>
        <taxon>Methanosarcina</taxon>
    </lineage>
</organism>
<dbReference type="EMBL" id="AE008384">
    <property type="protein sequence ID" value="AAM29949.1"/>
    <property type="molecule type" value="Genomic_DNA"/>
</dbReference>
<dbReference type="SMR" id="Q8Q084"/>
<dbReference type="KEGG" id="mma:MM_0253"/>
<dbReference type="PATRIC" id="fig|192952.21.peg.307"/>
<dbReference type="eggNOG" id="arCOG00470">
    <property type="taxonomic scope" value="Archaea"/>
</dbReference>
<dbReference type="HOGENOM" id="CLU_027255_0_0_2"/>
<dbReference type="Proteomes" id="UP000000595">
    <property type="component" value="Chromosome"/>
</dbReference>
<dbReference type="GO" id="GO:0005524">
    <property type="term" value="F:ATP binding"/>
    <property type="evidence" value="ECO:0007669"/>
    <property type="project" value="UniProtKB-UniRule"/>
</dbReference>
<dbReference type="GO" id="GO:0016887">
    <property type="term" value="F:ATP hydrolysis activity"/>
    <property type="evidence" value="ECO:0007669"/>
    <property type="project" value="InterPro"/>
</dbReference>
<dbReference type="GO" id="GO:0003689">
    <property type="term" value="F:DNA clamp loader activity"/>
    <property type="evidence" value="ECO:0007669"/>
    <property type="project" value="UniProtKB-UniRule"/>
</dbReference>
<dbReference type="GO" id="GO:0006260">
    <property type="term" value="P:DNA replication"/>
    <property type="evidence" value="ECO:0007669"/>
    <property type="project" value="UniProtKB-UniRule"/>
</dbReference>
<dbReference type="CDD" id="cd00009">
    <property type="entry name" value="AAA"/>
    <property type="match status" value="1"/>
</dbReference>
<dbReference type="CDD" id="cd18140">
    <property type="entry name" value="HLD_clamp_RFC"/>
    <property type="match status" value="1"/>
</dbReference>
<dbReference type="Gene3D" id="1.10.8.60">
    <property type="match status" value="1"/>
</dbReference>
<dbReference type="Gene3D" id="3.40.50.300">
    <property type="entry name" value="P-loop containing nucleotide triphosphate hydrolases"/>
    <property type="match status" value="1"/>
</dbReference>
<dbReference type="HAMAP" id="MF_01508">
    <property type="entry name" value="RfcL"/>
    <property type="match status" value="1"/>
</dbReference>
<dbReference type="InterPro" id="IPR003593">
    <property type="entry name" value="AAA+_ATPase"/>
</dbReference>
<dbReference type="InterPro" id="IPR003959">
    <property type="entry name" value="ATPase_AAA_core"/>
</dbReference>
<dbReference type="InterPro" id="IPR027417">
    <property type="entry name" value="P-loop_NTPase"/>
</dbReference>
<dbReference type="InterPro" id="IPR023935">
    <property type="entry name" value="Rep_factor-C_lsu"/>
</dbReference>
<dbReference type="InterPro" id="IPR047854">
    <property type="entry name" value="RFC_lid"/>
</dbReference>
<dbReference type="NCBIfam" id="NF003229">
    <property type="entry name" value="PRK04195.1-5"/>
    <property type="match status" value="1"/>
</dbReference>
<dbReference type="NCBIfam" id="NF003231">
    <property type="entry name" value="PRK04195.2-1"/>
    <property type="match status" value="1"/>
</dbReference>
<dbReference type="PANTHER" id="PTHR23389">
    <property type="entry name" value="CHROMOSOME TRANSMISSION FIDELITY FACTOR 18"/>
    <property type="match status" value="1"/>
</dbReference>
<dbReference type="PANTHER" id="PTHR23389:SF6">
    <property type="entry name" value="REPLICATION FACTOR C SUBUNIT 1"/>
    <property type="match status" value="1"/>
</dbReference>
<dbReference type="Pfam" id="PF00004">
    <property type="entry name" value="AAA"/>
    <property type="match status" value="1"/>
</dbReference>
<dbReference type="Pfam" id="PF21960">
    <property type="entry name" value="RCF1-5-like_lid"/>
    <property type="match status" value="1"/>
</dbReference>
<dbReference type="SMART" id="SM00382">
    <property type="entry name" value="AAA"/>
    <property type="match status" value="1"/>
</dbReference>
<dbReference type="SUPFAM" id="SSF52540">
    <property type="entry name" value="P-loop containing nucleoside triphosphate hydrolases"/>
    <property type="match status" value="1"/>
</dbReference>
<name>RFCL_METMA</name>
<accession>Q8Q084</accession>
<comment type="function">
    <text evidence="1">Part of the RFC clamp loader complex which loads the PCNA sliding clamp onto DNA.</text>
</comment>
<comment type="subunit">
    <text evidence="1">Heteromultimer composed of small subunits (RfcS) and large subunits (RfcL).</text>
</comment>
<comment type="similarity">
    <text evidence="1">Belongs to the activator 1 small subunits family. RfcL subfamily.</text>
</comment>
<gene>
    <name evidence="1" type="primary">rfcL</name>
    <name type="ordered locus">MM_0253</name>
</gene>
<keyword id="KW-0067">ATP-binding</keyword>
<keyword id="KW-0235">DNA replication</keyword>
<keyword id="KW-0547">Nucleotide-binding</keyword>
<evidence type="ECO:0000255" key="1">
    <source>
        <dbReference type="HAMAP-Rule" id="MF_01508"/>
    </source>
</evidence>
<evidence type="ECO:0000256" key="2">
    <source>
        <dbReference type="SAM" id="MobiDB-lite"/>
    </source>
</evidence>
<protein>
    <recommendedName>
        <fullName evidence="1">Replication factor C large subunit</fullName>
        <shortName evidence="1">RFC large subunit</shortName>
    </recommendedName>
    <alternativeName>
        <fullName evidence="1">Clamp loader large subunit</fullName>
    </alternativeName>
</protein>
<sequence length="610" mass="67574">MVWFKMMSAIEWAEKYRPRTLGDVVGNRKAVQDLRKWAEEWQSGIPEKRAVILYGPAGIGKTSSAHALAGDMEWEVIELNASDQRTAGVIEKIAGSAASMNTFFGGKRLIILDEADNLHGTADRGGMRAISGIIKSTLQPIILIANDIYGLTPTVRNICLEIKFGSVQSRSMVPALKKVCESEGVSCSQEAVLQIAENAGGDFRSAINDLQAAANGKKALEAEDISTAGRDVKENIFKAMQKIFKSTDCKRALESAYGLDESPEDLVHWIDENLPIQYARKDGDLEDIKTGFGYLSKADIYLGRVKKRQNYRMWRYASMLMVCGAALSKTRPYPGFIKYQQPSLWRRLGQTRSRRDMRDNIASKIGEHSFESMHYSRNNLLGFYSILLKDEASAVELTANLGLELEELMYLSGSAKVSKKLQKIYDEAQNLLETKRDRTEEQEFFKAPAPAADDKQATLHCPVNIPEKEGNASAEKPESPGPQSPERKQKTLDLGFDTPQKLPEKKRSSEMKLPENPEPAENNLFSLSEPLPEKGPIPDFAGKKSLPELEEEKPSLSPLKKMSPANKEASKQGVKQGASEKGSPAADTQGGMEDGSKKAEPKNQKTLFDF</sequence>
<proteinExistence type="inferred from homology"/>
<feature type="chain" id="PRO_0000135954" description="Replication factor C large subunit">
    <location>
        <begin position="1"/>
        <end position="610"/>
    </location>
</feature>
<feature type="region of interest" description="Disordered" evidence="2">
    <location>
        <begin position="467"/>
        <end position="610"/>
    </location>
</feature>
<feature type="compositionally biased region" description="Basic and acidic residues" evidence="2">
    <location>
        <begin position="467"/>
        <end position="478"/>
    </location>
</feature>
<feature type="compositionally biased region" description="Basic and acidic residues" evidence="2">
    <location>
        <begin position="502"/>
        <end position="515"/>
    </location>
</feature>
<feature type="compositionally biased region" description="Basic and acidic residues" evidence="2">
    <location>
        <begin position="594"/>
        <end position="603"/>
    </location>
</feature>
<feature type="binding site" evidence="1">
    <location>
        <begin position="55"/>
        <end position="62"/>
    </location>
    <ligand>
        <name>ATP</name>
        <dbReference type="ChEBI" id="CHEBI:30616"/>
    </ligand>
</feature>
<reference key="1">
    <citation type="journal article" date="2002" name="J. Mol. Microbiol. Biotechnol.">
        <title>The genome of Methanosarcina mazei: evidence for lateral gene transfer between Bacteria and Archaea.</title>
        <authorList>
            <person name="Deppenmeier U."/>
            <person name="Johann A."/>
            <person name="Hartsch T."/>
            <person name="Merkl R."/>
            <person name="Schmitz R.A."/>
            <person name="Martinez-Arias R."/>
            <person name="Henne A."/>
            <person name="Wiezer A."/>
            <person name="Baeumer S."/>
            <person name="Jacobi C."/>
            <person name="Brueggemann H."/>
            <person name="Lienard T."/>
            <person name="Christmann A."/>
            <person name="Boemecke M."/>
            <person name="Steckel S."/>
            <person name="Bhattacharyya A."/>
            <person name="Lykidis A."/>
            <person name="Overbeek R."/>
            <person name="Klenk H.-P."/>
            <person name="Gunsalus R.P."/>
            <person name="Fritz H.-J."/>
            <person name="Gottschalk G."/>
        </authorList>
    </citation>
    <scope>NUCLEOTIDE SEQUENCE [LARGE SCALE GENOMIC DNA]</scope>
    <source>
        <strain>ATCC BAA-159 / DSM 3647 / Goe1 / Go1 / JCM 11833 / OCM 88</strain>
    </source>
</reference>